<organism>
    <name type="scientific">Bordetella pertussis (strain Tohama I / ATCC BAA-589 / NCTC 13251)</name>
    <dbReference type="NCBI Taxonomy" id="257313"/>
    <lineage>
        <taxon>Bacteria</taxon>
        <taxon>Pseudomonadati</taxon>
        <taxon>Pseudomonadota</taxon>
        <taxon>Betaproteobacteria</taxon>
        <taxon>Burkholderiales</taxon>
        <taxon>Alcaligenaceae</taxon>
        <taxon>Bordetella</taxon>
    </lineage>
</organism>
<sequence>MEAVERVNLLGLDGAALSELVGQWGGKPFRARQLQRWVHQRGADSFDAMTDLARDFRAQLARDCVIEALPVNTEQRSSDGTRKWLFDVGQGNAIETVFIPEDDRGTLCISSQAGCVVNCRFCSTGHQGFNRNLRASEIIGQLWWAKRVLEAAADTARLPGGKAGEDTRVISNVVMMGMGEPLLNYDQVLPALRLMLDDNAYGLSRRRVTVSTSGVVPMMDRLSQDCPVALAVSLHAPNDALRDELVPLNKKYPLNALLAACERYLAHAPRDFITFEYCMLDGINDTDQHARELIQLARQVRCKLNLIPFNPFPASGLKRSPSARVRVFAQRLMDAGIVTTVRKTRGDDIDAACGQLAGEVRDRTRITERNATRTIPIQQVHA</sequence>
<evidence type="ECO:0000255" key="1">
    <source>
        <dbReference type="HAMAP-Rule" id="MF_01849"/>
    </source>
</evidence>
<evidence type="ECO:0000255" key="2">
    <source>
        <dbReference type="PROSITE-ProRule" id="PRU01266"/>
    </source>
</evidence>
<keyword id="KW-0004">4Fe-4S</keyword>
<keyword id="KW-0963">Cytoplasm</keyword>
<keyword id="KW-1015">Disulfide bond</keyword>
<keyword id="KW-0408">Iron</keyword>
<keyword id="KW-0411">Iron-sulfur</keyword>
<keyword id="KW-0479">Metal-binding</keyword>
<keyword id="KW-0489">Methyltransferase</keyword>
<keyword id="KW-1185">Reference proteome</keyword>
<keyword id="KW-0698">rRNA processing</keyword>
<keyword id="KW-0949">S-adenosyl-L-methionine</keyword>
<keyword id="KW-0808">Transferase</keyword>
<keyword id="KW-0819">tRNA processing</keyword>
<protein>
    <recommendedName>
        <fullName evidence="1">Dual-specificity RNA methyltransferase RlmN</fullName>
        <ecNumber evidence="1">2.1.1.192</ecNumber>
    </recommendedName>
    <alternativeName>
        <fullName evidence="1">23S rRNA (adenine(2503)-C(2))-methyltransferase</fullName>
    </alternativeName>
    <alternativeName>
        <fullName evidence="1">23S rRNA m2A2503 methyltransferase</fullName>
    </alternativeName>
    <alternativeName>
        <fullName evidence="1">Ribosomal RNA large subunit methyltransferase N</fullName>
    </alternativeName>
    <alternativeName>
        <fullName evidence="1">tRNA (adenine(37)-C(2))-methyltransferase</fullName>
    </alternativeName>
    <alternativeName>
        <fullName evidence="1">tRNA m2A37 methyltransferase</fullName>
    </alternativeName>
</protein>
<dbReference type="EC" id="2.1.1.192" evidence="1"/>
<dbReference type="EMBL" id="BX640417">
    <property type="protein sequence ID" value="CAE42479.1"/>
    <property type="molecule type" value="Genomic_DNA"/>
</dbReference>
<dbReference type="RefSeq" id="NP_880849.1">
    <property type="nucleotide sequence ID" value="NC_002929.2"/>
</dbReference>
<dbReference type="RefSeq" id="WP_004568542.1">
    <property type="nucleotide sequence ID" value="NZ_CP039022.1"/>
</dbReference>
<dbReference type="SMR" id="Q7VWK8"/>
<dbReference type="STRING" id="257313.BP2201"/>
<dbReference type="PaxDb" id="257313-BP2201"/>
<dbReference type="GeneID" id="69601977"/>
<dbReference type="KEGG" id="bpe:BP2201"/>
<dbReference type="PATRIC" id="fig|257313.5.peg.2375"/>
<dbReference type="eggNOG" id="COG0820">
    <property type="taxonomic scope" value="Bacteria"/>
</dbReference>
<dbReference type="HOGENOM" id="CLU_029101_0_0_4"/>
<dbReference type="Proteomes" id="UP000002676">
    <property type="component" value="Chromosome"/>
</dbReference>
<dbReference type="GO" id="GO:0005737">
    <property type="term" value="C:cytoplasm"/>
    <property type="evidence" value="ECO:0007669"/>
    <property type="project" value="UniProtKB-SubCell"/>
</dbReference>
<dbReference type="GO" id="GO:0051539">
    <property type="term" value="F:4 iron, 4 sulfur cluster binding"/>
    <property type="evidence" value="ECO:0007669"/>
    <property type="project" value="UniProtKB-UniRule"/>
</dbReference>
<dbReference type="GO" id="GO:0046872">
    <property type="term" value="F:metal ion binding"/>
    <property type="evidence" value="ECO:0007669"/>
    <property type="project" value="UniProtKB-KW"/>
</dbReference>
<dbReference type="GO" id="GO:0070040">
    <property type="term" value="F:rRNA (adenine(2503)-C2-)-methyltransferase activity"/>
    <property type="evidence" value="ECO:0007669"/>
    <property type="project" value="UniProtKB-UniRule"/>
</dbReference>
<dbReference type="GO" id="GO:0019843">
    <property type="term" value="F:rRNA binding"/>
    <property type="evidence" value="ECO:0007669"/>
    <property type="project" value="UniProtKB-UniRule"/>
</dbReference>
<dbReference type="GO" id="GO:0002935">
    <property type="term" value="F:tRNA (adenine(37)-C2)-methyltransferase activity"/>
    <property type="evidence" value="ECO:0007669"/>
    <property type="project" value="UniProtKB-UniRule"/>
</dbReference>
<dbReference type="GO" id="GO:0000049">
    <property type="term" value="F:tRNA binding"/>
    <property type="evidence" value="ECO:0007669"/>
    <property type="project" value="UniProtKB-UniRule"/>
</dbReference>
<dbReference type="GO" id="GO:0070475">
    <property type="term" value="P:rRNA base methylation"/>
    <property type="evidence" value="ECO:0007669"/>
    <property type="project" value="UniProtKB-UniRule"/>
</dbReference>
<dbReference type="GO" id="GO:0030488">
    <property type="term" value="P:tRNA methylation"/>
    <property type="evidence" value="ECO:0007669"/>
    <property type="project" value="UniProtKB-UniRule"/>
</dbReference>
<dbReference type="CDD" id="cd01335">
    <property type="entry name" value="Radical_SAM"/>
    <property type="match status" value="1"/>
</dbReference>
<dbReference type="FunFam" id="3.20.20.70:FF:000008">
    <property type="entry name" value="Dual-specificity RNA methyltransferase RlmN"/>
    <property type="match status" value="1"/>
</dbReference>
<dbReference type="Gene3D" id="1.10.150.530">
    <property type="match status" value="1"/>
</dbReference>
<dbReference type="Gene3D" id="3.20.20.70">
    <property type="entry name" value="Aldolase class I"/>
    <property type="match status" value="1"/>
</dbReference>
<dbReference type="HAMAP" id="MF_01849">
    <property type="entry name" value="RNA_methyltr_RlmN"/>
    <property type="match status" value="1"/>
</dbReference>
<dbReference type="InterPro" id="IPR013785">
    <property type="entry name" value="Aldolase_TIM"/>
</dbReference>
<dbReference type="InterPro" id="IPR040072">
    <property type="entry name" value="Methyltransferase_A"/>
</dbReference>
<dbReference type="InterPro" id="IPR048641">
    <property type="entry name" value="RlmN_N"/>
</dbReference>
<dbReference type="InterPro" id="IPR027492">
    <property type="entry name" value="RNA_MTrfase_RlmN"/>
</dbReference>
<dbReference type="InterPro" id="IPR004383">
    <property type="entry name" value="rRNA_lsu_MTrfase_RlmN/Cfr"/>
</dbReference>
<dbReference type="InterPro" id="IPR007197">
    <property type="entry name" value="rSAM"/>
</dbReference>
<dbReference type="NCBIfam" id="TIGR00048">
    <property type="entry name" value="rRNA_mod_RlmN"/>
    <property type="match status" value="1"/>
</dbReference>
<dbReference type="PANTHER" id="PTHR30544">
    <property type="entry name" value="23S RRNA METHYLTRANSFERASE"/>
    <property type="match status" value="1"/>
</dbReference>
<dbReference type="PANTHER" id="PTHR30544:SF5">
    <property type="entry name" value="RADICAL SAM CORE DOMAIN-CONTAINING PROTEIN"/>
    <property type="match status" value="1"/>
</dbReference>
<dbReference type="Pfam" id="PF04055">
    <property type="entry name" value="Radical_SAM"/>
    <property type="match status" value="1"/>
</dbReference>
<dbReference type="Pfam" id="PF21016">
    <property type="entry name" value="RlmN_N"/>
    <property type="match status" value="1"/>
</dbReference>
<dbReference type="PIRSF" id="PIRSF006004">
    <property type="entry name" value="CHP00048"/>
    <property type="match status" value="1"/>
</dbReference>
<dbReference type="SFLD" id="SFLDF00275">
    <property type="entry name" value="adenosine_C2_methyltransferase"/>
    <property type="match status" value="1"/>
</dbReference>
<dbReference type="SFLD" id="SFLDS00029">
    <property type="entry name" value="Radical_SAM"/>
    <property type="match status" value="1"/>
</dbReference>
<dbReference type="SUPFAM" id="SSF102114">
    <property type="entry name" value="Radical SAM enzymes"/>
    <property type="match status" value="1"/>
</dbReference>
<dbReference type="PROSITE" id="PS51918">
    <property type="entry name" value="RADICAL_SAM"/>
    <property type="match status" value="1"/>
</dbReference>
<feature type="chain" id="PRO_0000350057" description="Dual-specificity RNA methyltransferase RlmN">
    <location>
        <begin position="1"/>
        <end position="382"/>
    </location>
</feature>
<feature type="domain" description="Radical SAM core" evidence="2">
    <location>
        <begin position="101"/>
        <end position="348"/>
    </location>
</feature>
<feature type="active site" description="Proton acceptor" evidence="1">
    <location>
        <position position="95"/>
    </location>
</feature>
<feature type="active site" description="S-methylcysteine intermediate" evidence="1">
    <location>
        <position position="353"/>
    </location>
</feature>
<feature type="binding site" evidence="1">
    <location>
        <position position="115"/>
    </location>
    <ligand>
        <name>[4Fe-4S] cluster</name>
        <dbReference type="ChEBI" id="CHEBI:49883"/>
        <note>4Fe-4S-S-AdoMet</note>
    </ligand>
</feature>
<feature type="binding site" evidence="1">
    <location>
        <position position="119"/>
    </location>
    <ligand>
        <name>[4Fe-4S] cluster</name>
        <dbReference type="ChEBI" id="CHEBI:49883"/>
        <note>4Fe-4S-S-AdoMet</note>
    </ligand>
</feature>
<feature type="binding site" evidence="1">
    <location>
        <position position="122"/>
    </location>
    <ligand>
        <name>[4Fe-4S] cluster</name>
        <dbReference type="ChEBI" id="CHEBI:49883"/>
        <note>4Fe-4S-S-AdoMet</note>
    </ligand>
</feature>
<feature type="binding site" evidence="1">
    <location>
        <begin position="179"/>
        <end position="180"/>
    </location>
    <ligand>
        <name>S-adenosyl-L-methionine</name>
        <dbReference type="ChEBI" id="CHEBI:59789"/>
    </ligand>
</feature>
<feature type="binding site" evidence="1">
    <location>
        <position position="211"/>
    </location>
    <ligand>
        <name>S-adenosyl-L-methionine</name>
        <dbReference type="ChEBI" id="CHEBI:59789"/>
    </ligand>
</feature>
<feature type="binding site" evidence="1">
    <location>
        <begin position="233"/>
        <end position="235"/>
    </location>
    <ligand>
        <name>S-adenosyl-L-methionine</name>
        <dbReference type="ChEBI" id="CHEBI:59789"/>
    </ligand>
</feature>
<feature type="binding site" evidence="1">
    <location>
        <position position="310"/>
    </location>
    <ligand>
        <name>S-adenosyl-L-methionine</name>
        <dbReference type="ChEBI" id="CHEBI:59789"/>
    </ligand>
</feature>
<feature type="disulfide bond" description="(transient)" evidence="1">
    <location>
        <begin position="108"/>
        <end position="353"/>
    </location>
</feature>
<comment type="function">
    <text evidence="1">Specifically methylates position 2 of adenine 2503 in 23S rRNA and position 2 of adenine 37 in tRNAs. m2A2503 modification seems to play a crucial role in the proofreading step occurring at the peptidyl transferase center and thus would serve to optimize ribosomal fidelity.</text>
</comment>
<comment type="catalytic activity">
    <reaction evidence="1">
        <text>adenosine(2503) in 23S rRNA + 2 reduced [2Fe-2S]-[ferredoxin] + 2 S-adenosyl-L-methionine = 2-methyladenosine(2503) in 23S rRNA + 5'-deoxyadenosine + L-methionine + 2 oxidized [2Fe-2S]-[ferredoxin] + S-adenosyl-L-homocysteine</text>
        <dbReference type="Rhea" id="RHEA:42916"/>
        <dbReference type="Rhea" id="RHEA-COMP:10000"/>
        <dbReference type="Rhea" id="RHEA-COMP:10001"/>
        <dbReference type="Rhea" id="RHEA-COMP:10152"/>
        <dbReference type="Rhea" id="RHEA-COMP:10282"/>
        <dbReference type="ChEBI" id="CHEBI:17319"/>
        <dbReference type="ChEBI" id="CHEBI:33737"/>
        <dbReference type="ChEBI" id="CHEBI:33738"/>
        <dbReference type="ChEBI" id="CHEBI:57844"/>
        <dbReference type="ChEBI" id="CHEBI:57856"/>
        <dbReference type="ChEBI" id="CHEBI:59789"/>
        <dbReference type="ChEBI" id="CHEBI:74411"/>
        <dbReference type="ChEBI" id="CHEBI:74497"/>
        <dbReference type="EC" id="2.1.1.192"/>
    </reaction>
</comment>
<comment type="catalytic activity">
    <reaction evidence="1">
        <text>adenosine(37) in tRNA + 2 reduced [2Fe-2S]-[ferredoxin] + 2 S-adenosyl-L-methionine = 2-methyladenosine(37) in tRNA + 5'-deoxyadenosine + L-methionine + 2 oxidized [2Fe-2S]-[ferredoxin] + S-adenosyl-L-homocysteine</text>
        <dbReference type="Rhea" id="RHEA:43332"/>
        <dbReference type="Rhea" id="RHEA-COMP:10000"/>
        <dbReference type="Rhea" id="RHEA-COMP:10001"/>
        <dbReference type="Rhea" id="RHEA-COMP:10162"/>
        <dbReference type="Rhea" id="RHEA-COMP:10485"/>
        <dbReference type="ChEBI" id="CHEBI:17319"/>
        <dbReference type="ChEBI" id="CHEBI:33737"/>
        <dbReference type="ChEBI" id="CHEBI:33738"/>
        <dbReference type="ChEBI" id="CHEBI:57844"/>
        <dbReference type="ChEBI" id="CHEBI:57856"/>
        <dbReference type="ChEBI" id="CHEBI:59789"/>
        <dbReference type="ChEBI" id="CHEBI:74411"/>
        <dbReference type="ChEBI" id="CHEBI:74497"/>
        <dbReference type="EC" id="2.1.1.192"/>
    </reaction>
</comment>
<comment type="cofactor">
    <cofactor evidence="1">
        <name>[4Fe-4S] cluster</name>
        <dbReference type="ChEBI" id="CHEBI:49883"/>
    </cofactor>
    <text evidence="1">Binds 1 [4Fe-4S] cluster. The cluster is coordinated with 3 cysteines and an exchangeable S-adenosyl-L-methionine.</text>
</comment>
<comment type="subcellular location">
    <subcellularLocation>
        <location evidence="1">Cytoplasm</location>
    </subcellularLocation>
</comment>
<comment type="miscellaneous">
    <text evidence="1">Reaction proceeds by a ping-pong mechanism involving intermediate methylation of a conserved cysteine residue.</text>
</comment>
<comment type="similarity">
    <text evidence="1">Belongs to the radical SAM superfamily. RlmN family.</text>
</comment>
<reference key="1">
    <citation type="journal article" date="2003" name="Nat. Genet.">
        <title>Comparative analysis of the genome sequences of Bordetella pertussis, Bordetella parapertussis and Bordetella bronchiseptica.</title>
        <authorList>
            <person name="Parkhill J."/>
            <person name="Sebaihia M."/>
            <person name="Preston A."/>
            <person name="Murphy L.D."/>
            <person name="Thomson N.R."/>
            <person name="Harris D.E."/>
            <person name="Holden M.T.G."/>
            <person name="Churcher C.M."/>
            <person name="Bentley S.D."/>
            <person name="Mungall K.L."/>
            <person name="Cerdeno-Tarraga A.-M."/>
            <person name="Temple L."/>
            <person name="James K.D."/>
            <person name="Harris B."/>
            <person name="Quail M.A."/>
            <person name="Achtman M."/>
            <person name="Atkin R."/>
            <person name="Baker S."/>
            <person name="Basham D."/>
            <person name="Bason N."/>
            <person name="Cherevach I."/>
            <person name="Chillingworth T."/>
            <person name="Collins M."/>
            <person name="Cronin A."/>
            <person name="Davis P."/>
            <person name="Doggett J."/>
            <person name="Feltwell T."/>
            <person name="Goble A."/>
            <person name="Hamlin N."/>
            <person name="Hauser H."/>
            <person name="Holroyd S."/>
            <person name="Jagels K."/>
            <person name="Leather S."/>
            <person name="Moule S."/>
            <person name="Norberczak H."/>
            <person name="O'Neil S."/>
            <person name="Ormond D."/>
            <person name="Price C."/>
            <person name="Rabbinowitsch E."/>
            <person name="Rutter S."/>
            <person name="Sanders M."/>
            <person name="Saunders D."/>
            <person name="Seeger K."/>
            <person name="Sharp S."/>
            <person name="Simmonds M."/>
            <person name="Skelton J."/>
            <person name="Squares R."/>
            <person name="Squares S."/>
            <person name="Stevens K."/>
            <person name="Unwin L."/>
            <person name="Whitehead S."/>
            <person name="Barrell B.G."/>
            <person name="Maskell D.J."/>
        </authorList>
    </citation>
    <scope>NUCLEOTIDE SEQUENCE [LARGE SCALE GENOMIC DNA]</scope>
    <source>
        <strain>Tohama I / ATCC BAA-589 / NCTC 13251</strain>
    </source>
</reference>
<gene>
    <name evidence="1" type="primary">rlmN</name>
    <name type="ordered locus">BP2201</name>
</gene>
<proteinExistence type="inferred from homology"/>
<name>RLMN_BORPE</name>
<accession>Q7VWK8</accession>